<evidence type="ECO:0000250" key="1"/>
<evidence type="ECO:0000255" key="2">
    <source>
        <dbReference type="PROSITE-ProRule" id="PRU01059"/>
    </source>
</evidence>
<dbReference type="EMBL" id="Y07780">
    <property type="protein sequence ID" value="CAA69103.1"/>
    <property type="molecule type" value="Genomic_DNA"/>
</dbReference>
<dbReference type="RefSeq" id="WP_000691759.1">
    <property type="nucleotide sequence ID" value="NZ_CRTO01000002.1"/>
</dbReference>
<dbReference type="SMR" id="P72533"/>
<dbReference type="GeneID" id="92863438"/>
<dbReference type="GO" id="GO:0005525">
    <property type="term" value="F:GTP binding"/>
    <property type="evidence" value="ECO:0007669"/>
    <property type="project" value="UniProtKB-KW"/>
</dbReference>
<dbReference type="GO" id="GO:0003924">
    <property type="term" value="F:GTPase activity"/>
    <property type="evidence" value="ECO:0007669"/>
    <property type="project" value="InterPro"/>
</dbReference>
<dbReference type="GO" id="GO:0046677">
    <property type="term" value="P:response to antibiotic"/>
    <property type="evidence" value="ECO:0007669"/>
    <property type="project" value="UniProtKB-KW"/>
</dbReference>
<dbReference type="GO" id="GO:0032790">
    <property type="term" value="P:ribosome disassembly"/>
    <property type="evidence" value="ECO:0007669"/>
    <property type="project" value="TreeGrafter"/>
</dbReference>
<dbReference type="GO" id="GO:0006412">
    <property type="term" value="P:translation"/>
    <property type="evidence" value="ECO:0007669"/>
    <property type="project" value="UniProtKB-KW"/>
</dbReference>
<dbReference type="CDD" id="cd03711">
    <property type="entry name" value="Tet_C"/>
    <property type="match status" value="1"/>
</dbReference>
<dbReference type="CDD" id="cd03690">
    <property type="entry name" value="Tet_II"/>
    <property type="match status" value="1"/>
</dbReference>
<dbReference type="CDD" id="cd16258">
    <property type="entry name" value="Tet_III"/>
    <property type="match status" value="1"/>
</dbReference>
<dbReference type="CDD" id="cd01684">
    <property type="entry name" value="Tet_like_IV"/>
    <property type="match status" value="1"/>
</dbReference>
<dbReference type="CDD" id="cd04168">
    <property type="entry name" value="TetM_like"/>
    <property type="match status" value="1"/>
</dbReference>
<dbReference type="Gene3D" id="3.30.230.10">
    <property type="match status" value="1"/>
</dbReference>
<dbReference type="Gene3D" id="3.30.70.240">
    <property type="match status" value="1"/>
</dbReference>
<dbReference type="Gene3D" id="3.30.70.870">
    <property type="entry name" value="Elongation Factor G (Translational Gtpase), domain 3"/>
    <property type="match status" value="1"/>
</dbReference>
<dbReference type="Gene3D" id="3.40.50.300">
    <property type="entry name" value="P-loop containing nucleotide triphosphate hydrolases"/>
    <property type="match status" value="1"/>
</dbReference>
<dbReference type="Gene3D" id="2.40.30.10">
    <property type="entry name" value="Translation factors"/>
    <property type="match status" value="1"/>
</dbReference>
<dbReference type="InterPro" id="IPR053905">
    <property type="entry name" value="EF-G-like_DII"/>
</dbReference>
<dbReference type="InterPro" id="IPR041095">
    <property type="entry name" value="EFG_II"/>
</dbReference>
<dbReference type="InterPro" id="IPR035647">
    <property type="entry name" value="EFG_III/V"/>
</dbReference>
<dbReference type="InterPro" id="IPR000640">
    <property type="entry name" value="EFG_V-like"/>
</dbReference>
<dbReference type="InterPro" id="IPR031157">
    <property type="entry name" value="G_TR_CS"/>
</dbReference>
<dbReference type="InterPro" id="IPR027417">
    <property type="entry name" value="P-loop_NTPase"/>
</dbReference>
<dbReference type="InterPro" id="IPR020568">
    <property type="entry name" value="Ribosomal_Su5_D2-typ_SF"/>
</dbReference>
<dbReference type="InterPro" id="IPR014721">
    <property type="entry name" value="Ribsml_uS5_D2-typ_fold_subgr"/>
</dbReference>
<dbReference type="InterPro" id="IPR005225">
    <property type="entry name" value="Small_GTP-bd"/>
</dbReference>
<dbReference type="InterPro" id="IPR000795">
    <property type="entry name" value="T_Tr_GTP-bd_dom"/>
</dbReference>
<dbReference type="InterPro" id="IPR035650">
    <property type="entry name" value="Tet_C"/>
</dbReference>
<dbReference type="InterPro" id="IPR009000">
    <property type="entry name" value="Transl_B-barrel_sf"/>
</dbReference>
<dbReference type="InterPro" id="IPR005517">
    <property type="entry name" value="Transl_elong_EFG/EF2_IV"/>
</dbReference>
<dbReference type="NCBIfam" id="TIGR00231">
    <property type="entry name" value="small_GTP"/>
    <property type="match status" value="1"/>
</dbReference>
<dbReference type="NCBIfam" id="NF012153">
    <property type="entry name" value="tet_protect"/>
    <property type="match status" value="1"/>
</dbReference>
<dbReference type="NCBIfam" id="NF033148">
    <property type="entry name" value="tet_protect_M_W"/>
    <property type="match status" value="1"/>
</dbReference>
<dbReference type="PANTHER" id="PTHR43261:SF1">
    <property type="entry name" value="RIBOSOME-RELEASING FACTOR 2, MITOCHONDRIAL"/>
    <property type="match status" value="1"/>
</dbReference>
<dbReference type="PANTHER" id="PTHR43261">
    <property type="entry name" value="TRANSLATION ELONGATION FACTOR G-RELATED"/>
    <property type="match status" value="1"/>
</dbReference>
<dbReference type="Pfam" id="PF22042">
    <property type="entry name" value="EF-G_D2"/>
    <property type="match status" value="1"/>
</dbReference>
<dbReference type="Pfam" id="PF00679">
    <property type="entry name" value="EFG_C"/>
    <property type="match status" value="1"/>
</dbReference>
<dbReference type="Pfam" id="PF14492">
    <property type="entry name" value="EFG_III"/>
    <property type="match status" value="1"/>
</dbReference>
<dbReference type="Pfam" id="PF03764">
    <property type="entry name" value="EFG_IV"/>
    <property type="match status" value="1"/>
</dbReference>
<dbReference type="Pfam" id="PF00009">
    <property type="entry name" value="GTP_EFTU"/>
    <property type="match status" value="1"/>
</dbReference>
<dbReference type="PRINTS" id="PR00315">
    <property type="entry name" value="ELONGATNFCT"/>
</dbReference>
<dbReference type="PRINTS" id="PR01037">
    <property type="entry name" value="TCRTETOQM"/>
</dbReference>
<dbReference type="SMART" id="SM00889">
    <property type="entry name" value="EFG_IV"/>
    <property type="match status" value="1"/>
</dbReference>
<dbReference type="SUPFAM" id="SSF54980">
    <property type="entry name" value="EF-G C-terminal domain-like"/>
    <property type="match status" value="2"/>
</dbReference>
<dbReference type="SUPFAM" id="SSF52540">
    <property type="entry name" value="P-loop containing nucleoside triphosphate hydrolases"/>
    <property type="match status" value="1"/>
</dbReference>
<dbReference type="SUPFAM" id="SSF54211">
    <property type="entry name" value="Ribosomal protein S5 domain 2-like"/>
    <property type="match status" value="1"/>
</dbReference>
<dbReference type="SUPFAM" id="SSF50447">
    <property type="entry name" value="Translation proteins"/>
    <property type="match status" value="1"/>
</dbReference>
<dbReference type="PROSITE" id="PS00301">
    <property type="entry name" value="G_TR_1"/>
    <property type="match status" value="1"/>
</dbReference>
<dbReference type="PROSITE" id="PS51722">
    <property type="entry name" value="G_TR_2"/>
    <property type="match status" value="1"/>
</dbReference>
<name>TETO_STREE</name>
<protein>
    <recommendedName>
        <fullName>Tetracycline resistance protein TetO</fullName>
        <shortName>Tet(O)</shortName>
    </recommendedName>
</protein>
<gene>
    <name type="primary">tetO</name>
    <name type="synonym">tet(O)</name>
</gene>
<keyword id="KW-0046">Antibiotic resistance</keyword>
<keyword id="KW-0342">GTP-binding</keyword>
<keyword id="KW-0547">Nucleotide-binding</keyword>
<keyword id="KW-0648">Protein biosynthesis</keyword>
<sequence>MKIINLGILAHVDAGKTTLTESLLYTSGAIAEPGSVDKGTTRTDTMNLERQRGITIQTAVTSFQWEDVKVNIIDTPGHMDFLAEVYRSLSVLDGAVLLVSAKDGIQAQTRILFHALQTMKIPTIFFINKIDQEGIDLPMVYQEMKAKLSSEIIVKQKVGQHPHINVTDNDDMEQWDAVIMGNDELLEKYMSGKPFKMSELEQEENRRFQNGTLFPVYHGSAKNNLGIRQLIEVIASKFYSSTPEGQSELCGQVFKIEYSEKRRRFVYVRIYSGTLHLRDVIKISEKEKIKITEMCVPTNGELYSSDTACSGDIVILPNDVLQLNSILGNEMLLPQRKFIENPLPMLQTTIAVKKSEQREILLGALTEISDGDPLLKYYVDTTTHEIILSFLGNVQMEVICAILEEKYHVEAEIKEPTVIYMERPLRKAEYTIHIEVPPNPFWASVGLSIEPLPIGSGVQYESRVSLGYLNQSFQNAVMEGVLYGCEQGLYGWKVTDCKICFEYGLYYSPVSTPADFRLLSPIVLEQALKKAGTELLEPYLHFEIYAPQEYLSRAYHDAPRYCADIVSTQVKNDEVILKGEIPARCIQEYRNDLTYFTNGQGVCLTELKGYQPAIGKFICQPRRPNSRIDKVRHMFHKLA</sequence>
<reference key="1">
    <citation type="journal article" date="1996" name="Antimicrob. Agents Chemother.">
        <title>Identification of the tetracycline resistance gene, tet(O), in Streptococcus pneumoniae.</title>
        <authorList>
            <person name="Widdowson C.A."/>
            <person name="Klugman K.P."/>
            <person name="Hanslo D."/>
        </authorList>
    </citation>
    <scope>NUCLEOTIDE SEQUENCE [GENOMIC DNA]</scope>
    <source>
        <strain>SA40300</strain>
    </source>
</reference>
<proteinExistence type="inferred from homology"/>
<accession>P72533</accession>
<organism>
    <name type="scientific">Streptococcus pneumoniae</name>
    <dbReference type="NCBI Taxonomy" id="1313"/>
    <lineage>
        <taxon>Bacteria</taxon>
        <taxon>Bacillati</taxon>
        <taxon>Bacillota</taxon>
        <taxon>Bacilli</taxon>
        <taxon>Lactobacillales</taxon>
        <taxon>Streptococcaceae</taxon>
        <taxon>Streptococcus</taxon>
    </lineage>
</organism>
<feature type="chain" id="PRO_0000091507" description="Tetracycline resistance protein TetO">
    <location>
        <begin position="1"/>
        <end position="639"/>
    </location>
</feature>
<feature type="domain" description="tr-type G" evidence="2">
    <location>
        <begin position="1"/>
        <end position="244"/>
    </location>
</feature>
<feature type="binding site" evidence="1">
    <location>
        <begin position="10"/>
        <end position="17"/>
    </location>
    <ligand>
        <name>GTP</name>
        <dbReference type="ChEBI" id="CHEBI:37565"/>
    </ligand>
</feature>
<feature type="binding site" evidence="1">
    <location>
        <begin position="74"/>
        <end position="78"/>
    </location>
    <ligand>
        <name>GTP</name>
        <dbReference type="ChEBI" id="CHEBI:37565"/>
    </ligand>
</feature>
<feature type="binding site" evidence="1">
    <location>
        <begin position="128"/>
        <end position="131"/>
    </location>
    <ligand>
        <name>GTP</name>
        <dbReference type="ChEBI" id="CHEBI:37565"/>
    </ligand>
</feature>
<comment type="function">
    <text>Abolishes the inhibitory effect of tetracyclin on protein synthesis by a non-covalent modification of the ribosomes.</text>
</comment>
<comment type="similarity">
    <text evidence="2">Belongs to the TRAFAC class translation factor GTPase superfamily. Classic translation factor GTPase family. TetM/TetO subfamily.</text>
</comment>